<name>TFP11_BOVIN</name>
<feature type="chain" id="PRO_0000342269" description="Tuftelin-interacting protein 11">
    <location>
        <begin position="1"/>
        <end position="837"/>
    </location>
</feature>
<feature type="domain" description="G-patch" evidence="4">
    <location>
        <begin position="149"/>
        <end position="195"/>
    </location>
</feature>
<feature type="region of interest" description="Required for interaction with DHX15" evidence="1">
    <location>
        <begin position="1"/>
        <end position="50"/>
    </location>
</feature>
<feature type="region of interest" description="Disordered" evidence="5">
    <location>
        <begin position="1"/>
        <end position="31"/>
    </location>
</feature>
<feature type="region of interest" description="Disordered" evidence="5">
    <location>
        <begin position="54"/>
        <end position="73"/>
    </location>
</feature>
<feature type="region of interest" description="Disordered" evidence="5">
    <location>
        <begin position="85"/>
        <end position="136"/>
    </location>
</feature>
<feature type="region of interest" description="Disordered" evidence="5">
    <location>
        <begin position="183"/>
        <end position="236"/>
    </location>
</feature>
<feature type="region of interest" description="Disordered" evidence="5">
    <location>
        <begin position="287"/>
        <end position="313"/>
    </location>
</feature>
<feature type="region of interest" description="Required for nuclear speckle localization" evidence="1">
    <location>
        <begin position="710"/>
        <end position="734"/>
    </location>
</feature>
<feature type="short sequence motif" description="Nuclear localization signal" evidence="1">
    <location>
        <begin position="700"/>
        <end position="705"/>
    </location>
</feature>
<feature type="compositionally biased region" description="Basic and acidic residues" evidence="5">
    <location>
        <begin position="1"/>
        <end position="13"/>
    </location>
</feature>
<feature type="compositionally biased region" description="Acidic residues" evidence="5">
    <location>
        <begin position="14"/>
        <end position="28"/>
    </location>
</feature>
<feature type="compositionally biased region" description="Basic and acidic residues" evidence="5">
    <location>
        <begin position="54"/>
        <end position="64"/>
    </location>
</feature>
<feature type="compositionally biased region" description="Acidic residues" evidence="5">
    <location>
        <begin position="91"/>
        <end position="102"/>
    </location>
</feature>
<feature type="compositionally biased region" description="Basic and acidic residues" evidence="5">
    <location>
        <begin position="103"/>
        <end position="116"/>
    </location>
</feature>
<feature type="compositionally biased region" description="Basic and acidic residues" evidence="5">
    <location>
        <begin position="217"/>
        <end position="231"/>
    </location>
</feature>
<feature type="modified residue" description="Phosphoserine" evidence="2">
    <location>
        <position position="2"/>
    </location>
</feature>
<feature type="modified residue" description="Phosphoserine" evidence="3">
    <location>
        <position position="59"/>
    </location>
</feature>
<feature type="modified residue" description="Phosphoserine" evidence="3">
    <location>
        <position position="98"/>
    </location>
</feature>
<feature type="modified residue" description="Phosphoserine" evidence="3">
    <location>
        <position position="144"/>
    </location>
</feature>
<feature type="modified residue" description="Phosphoserine" evidence="3">
    <location>
        <position position="210"/>
    </location>
</feature>
<feature type="sequence conflict" description="In Ref. 2; AAI14059." evidence="6" ref="2">
    <original>A</original>
    <variation>V</variation>
    <location>
        <position position="133"/>
    </location>
</feature>
<feature type="sequence conflict" description="In Ref. 1; ABC69921." evidence="6" ref="1">
    <original>S</original>
    <variation>A</variation>
    <location>
        <position position="360"/>
    </location>
</feature>
<feature type="sequence conflict" description="In Ref. 1; ABC69921." evidence="6" ref="1">
    <original>C</original>
    <variation>Y</variation>
    <location>
        <position position="391"/>
    </location>
</feature>
<feature type="sequence conflict" description="In Ref. 2; AAI14059." evidence="6" ref="2">
    <original>L</original>
    <variation>Q</variation>
    <location>
        <position position="508"/>
    </location>
</feature>
<feature type="sequence conflict" description="In Ref. 2; AAI14059." evidence="6" ref="2">
    <original>M</original>
    <variation>K</variation>
    <location>
        <position position="711"/>
    </location>
</feature>
<organism>
    <name type="scientific">Bos taurus</name>
    <name type="common">Bovine</name>
    <dbReference type="NCBI Taxonomy" id="9913"/>
    <lineage>
        <taxon>Eukaryota</taxon>
        <taxon>Metazoa</taxon>
        <taxon>Chordata</taxon>
        <taxon>Craniata</taxon>
        <taxon>Vertebrata</taxon>
        <taxon>Euteleostomi</taxon>
        <taxon>Mammalia</taxon>
        <taxon>Eutheria</taxon>
        <taxon>Laurasiatheria</taxon>
        <taxon>Artiodactyla</taxon>
        <taxon>Ruminantia</taxon>
        <taxon>Pecora</taxon>
        <taxon>Bovidae</taxon>
        <taxon>Bovinae</taxon>
        <taxon>Bos</taxon>
    </lineage>
</organism>
<evidence type="ECO:0000250" key="1"/>
<evidence type="ECO:0000250" key="2">
    <source>
        <dbReference type="UniProtKB" id="Q5U2Y6"/>
    </source>
</evidence>
<evidence type="ECO:0000250" key="3">
    <source>
        <dbReference type="UniProtKB" id="Q9UBB9"/>
    </source>
</evidence>
<evidence type="ECO:0000255" key="4">
    <source>
        <dbReference type="PROSITE-ProRule" id="PRU00092"/>
    </source>
</evidence>
<evidence type="ECO:0000256" key="5">
    <source>
        <dbReference type="SAM" id="MobiDB-lite"/>
    </source>
</evidence>
<evidence type="ECO:0000305" key="6"/>
<protein>
    <recommendedName>
        <fullName>Tuftelin-interacting protein 11</fullName>
    </recommendedName>
    <alternativeName>
        <fullName>Septin and tuftelin-interacting protein 1</fullName>
        <shortName>STIP-1</shortName>
    </alternativeName>
</protein>
<gene>
    <name type="primary">TFIP11</name>
    <name type="synonym">STIP</name>
</gene>
<comment type="function">
    <text evidence="1">Involved in pre-mRNA splicing, specifically in spliceosome disassembly during late-stage splicing events. Intron turnover seems to proceed through reactions in two lariat-intron associated complexes termed Intron Large (IL) and Intron Small (IS). In cooperation with DHX15 seems to mediate the transition of the U2, U5 and U6 snRNP-containing IL complex to the snRNP-free IS complex leading to efficient debranching and turnover of excised introns. May play a role in the differentiation of ameloblasts and odontoblasts or in the forming of the enamel extracellular matrix (By similarity).</text>
</comment>
<comment type="subunit">
    <text evidence="1">Identified in the spliceosome C complex. Found in the Intron Large (IL) complex, a post-mRNA release spliceosomal complex containing the excised intron, U2, U5 and U6 snRNPs, and splicing factors. Interacts with TUFT1. Interacts with DHX15; indicative for a recruitment of DHX15 to the IL complex. Interacts with GCFC2 (By similarity).</text>
</comment>
<comment type="subcellular location">
    <subcellularLocation>
        <location evidence="1">Cytoplasm</location>
    </subcellularLocation>
    <subcellularLocation>
        <location evidence="1">Nucleus</location>
    </subcellularLocation>
    <text evidence="1">In the nucleus localizes to unique speckle domains in close proximity to nuclear speckles and not identical to paraspeckles.</text>
</comment>
<comment type="similarity">
    <text evidence="6">Belongs to the TFP11/STIP family.</text>
</comment>
<keyword id="KW-0091">Biomineralization</keyword>
<keyword id="KW-0963">Cytoplasm</keyword>
<keyword id="KW-0507">mRNA processing</keyword>
<keyword id="KW-0508">mRNA splicing</keyword>
<keyword id="KW-0539">Nucleus</keyword>
<keyword id="KW-0597">Phosphoprotein</keyword>
<keyword id="KW-1185">Reference proteome</keyword>
<keyword id="KW-0747">Spliceosome</keyword>
<reference key="1">
    <citation type="journal article" date="2007" name="Exp. Cell Res.">
        <title>Characterization of STIP, a multi-domain nuclear protein, highly conserved in metazoans, and essential for embryogenesis in Caenorhabditis elegans.</title>
        <authorList>
            <person name="Ji Q."/>
            <person name="Huang C.-H."/>
            <person name="Peng J."/>
            <person name="Hashmi S."/>
            <person name="Ye T."/>
            <person name="Chen Y."/>
        </authorList>
    </citation>
    <scope>NUCLEOTIDE SEQUENCE [MRNA]</scope>
</reference>
<reference key="2">
    <citation type="submission" date="2006-02" db="EMBL/GenBank/DDBJ databases">
        <authorList>
            <consortium name="NIH - Mammalian Gene Collection (MGC) project"/>
        </authorList>
    </citation>
    <scope>NUCLEOTIDE SEQUENCE [LARGE SCALE MRNA]</scope>
    <source>
        <strain>Hereford</strain>
        <tissue>Testis</tissue>
    </source>
</reference>
<accession>Q29RR5</accession>
<accession>A1XD96</accession>
<sequence length="837" mass="96085">MSLSHLYRDGEGHMDDDEDERENFEITDWDLQNEFNPNRQRHWQTKEEATYGVWAERDSDEERPSFGGKRARDYSAPVNFISAGLKKGAAEEAELEDSDDEEKPVKQDEFPKDFGPKKLKTGGNFKPSQKGFAGGTKSFMDFGSWERHTKGIGQKLLQKMGYVPGRGLGKNAQGIINPIEAKQRKGKGAVGAYGSERTTQSLQDFPVVDSEEEAEEEFQKELSQWRKDPSGSKKKPKYSYKTVEELKAKGRISKKLTAPQKELSQVKVIDMTGREQKVYYSYSQISHKHSVPDDGLPPQAQPPPPPGKEARAPGFALPELEHNLQLLIELTEQEIIRNDRQLQYERDVVVNLTHELEKASGALQQEQRAIASLSEVLALVEECERRLQPGCSDPLTLDECARVFQTLRDKYYEEYRMSDRVDLAVAIVYPLMKDYFKEWDPLKDCTYGTETISQWKSLLENDQLLSHGGQDLSADAFHRLIWEVWMPFVRSIVAQWQPRNCDPMVDFLDSWAPLIPVWVLDNILEQLIFPKLQKEVESWNPLTDTVPIHSWVHPWLPLMQARLEPLYSPIRSKLASALQKWHPSDSSAKLILQPWKDVFTPGSWEAFMVKNIVPKLGMCLGELVINPHQQHMDAFYWVIDWEGMVSVSSLVGLLEKHFFPKWLQVLCSWLSNSPNYEEITKWYLGWKSMFSDQVLAHPSVKDKFNEALDIMNRAVSSNVGAYMQPGAREHIAYLTHTERRKDFQYEAMQERREAENMAQRGIGVAASAVPMNFKDLIETKAEEHNIVFMPVIGKRHEGKQLYTFGRIVIYIDRGVVFVQGEKTWVPTSLQSLIDMAK</sequence>
<dbReference type="EMBL" id="DQ342029">
    <property type="protein sequence ID" value="ABC69921.1"/>
    <property type="molecule type" value="mRNA"/>
</dbReference>
<dbReference type="EMBL" id="BC114058">
    <property type="protein sequence ID" value="AAI14059.1"/>
    <property type="molecule type" value="mRNA"/>
</dbReference>
<dbReference type="RefSeq" id="NP_001039495.2">
    <property type="nucleotide sequence ID" value="NM_001046030.2"/>
</dbReference>
<dbReference type="SMR" id="Q29RR5"/>
<dbReference type="FunCoup" id="Q29RR5">
    <property type="interactions" value="4146"/>
</dbReference>
<dbReference type="STRING" id="9913.ENSBTAP00000016296"/>
<dbReference type="PaxDb" id="9913-ENSBTAP00000016296"/>
<dbReference type="GeneID" id="509349"/>
<dbReference type="KEGG" id="bta:509349"/>
<dbReference type="CTD" id="24144"/>
<dbReference type="eggNOG" id="KOG2184">
    <property type="taxonomic scope" value="Eukaryota"/>
</dbReference>
<dbReference type="InParanoid" id="Q29RR5"/>
<dbReference type="OrthoDB" id="4822at2759"/>
<dbReference type="Proteomes" id="UP000009136">
    <property type="component" value="Unplaced"/>
</dbReference>
<dbReference type="GO" id="GO:0005737">
    <property type="term" value="C:cytoplasm"/>
    <property type="evidence" value="ECO:0007669"/>
    <property type="project" value="UniProtKB-SubCell"/>
</dbReference>
<dbReference type="GO" id="GO:0005681">
    <property type="term" value="C:spliceosomal complex"/>
    <property type="evidence" value="ECO:0000250"/>
    <property type="project" value="UniProtKB"/>
</dbReference>
<dbReference type="GO" id="GO:0071008">
    <property type="term" value="C:U2-type post-mRNA release spliceosomal complex"/>
    <property type="evidence" value="ECO:0000250"/>
    <property type="project" value="UniProtKB"/>
</dbReference>
<dbReference type="GO" id="GO:0003676">
    <property type="term" value="F:nucleic acid binding"/>
    <property type="evidence" value="ECO:0007669"/>
    <property type="project" value="InterPro"/>
</dbReference>
<dbReference type="GO" id="GO:0031214">
    <property type="term" value="P:biomineral tissue development"/>
    <property type="evidence" value="ECO:0007669"/>
    <property type="project" value="UniProtKB-KW"/>
</dbReference>
<dbReference type="GO" id="GO:0000390">
    <property type="term" value="P:spliceosomal complex disassembly"/>
    <property type="evidence" value="ECO:0000250"/>
    <property type="project" value="UniProtKB"/>
</dbReference>
<dbReference type="InterPro" id="IPR000467">
    <property type="entry name" value="G_patch_dom"/>
</dbReference>
<dbReference type="InterPro" id="IPR022783">
    <property type="entry name" value="GCFC_dom"/>
</dbReference>
<dbReference type="InterPro" id="IPR022159">
    <property type="entry name" value="STIP/TFIP11_N"/>
</dbReference>
<dbReference type="InterPro" id="IPR024933">
    <property type="entry name" value="TFP11"/>
</dbReference>
<dbReference type="InterPro" id="IPR045211">
    <property type="entry name" value="TFP11/STIP/Ntr1"/>
</dbReference>
<dbReference type="PANTHER" id="PTHR23329:SF1">
    <property type="entry name" value="TUFTELIN-INTERACTING PROTEIN 11"/>
    <property type="match status" value="1"/>
</dbReference>
<dbReference type="PANTHER" id="PTHR23329">
    <property type="entry name" value="TUFTELIN-INTERACTING PROTEIN 11-RELATED"/>
    <property type="match status" value="1"/>
</dbReference>
<dbReference type="Pfam" id="PF01585">
    <property type="entry name" value="G-patch"/>
    <property type="match status" value="1"/>
</dbReference>
<dbReference type="Pfam" id="PF07842">
    <property type="entry name" value="GCFC"/>
    <property type="match status" value="1"/>
</dbReference>
<dbReference type="Pfam" id="PF12457">
    <property type="entry name" value="TIP_N"/>
    <property type="match status" value="1"/>
</dbReference>
<dbReference type="PIRSF" id="PIRSF017706">
    <property type="entry name" value="TFIP11"/>
    <property type="match status" value="1"/>
</dbReference>
<dbReference type="SMART" id="SM00443">
    <property type="entry name" value="G_patch"/>
    <property type="match status" value="1"/>
</dbReference>
<dbReference type="PROSITE" id="PS50174">
    <property type="entry name" value="G_PATCH"/>
    <property type="match status" value="1"/>
</dbReference>
<proteinExistence type="evidence at transcript level"/>